<gene>
    <name type="ordered locus">MG370</name>
</gene>
<name>Y370_MYCGE</name>
<sequence>MRIANKFLVPKESENQRIDQFCLKILPLIKRSDFFKYLRLGKVLLNKTKPQVNTRLKTKDEIAFLFDINPYLQTNNDYLSLDLVKDKLKIIFEDENIIVVDKPTGIVCQPDKKHSIINLSNMLLKHCGYRQFDSNKLNFYPQFAHRIDRNTSGIVIGAKTNKALKELNKVFKNNHLTKRYKGLVFGQFNHLGLQTAYWKKDNNNGIVTVKWKPFPEAKKISTFFENSSYIAQKDMSLITIRLISGRTHQIRACLNLFSNQLVGDKKYSLIQFKNRNNKYKHQALHAYELVFPKLETSKFPILTNYSLMQFKSKIVPWFEYLIQ</sequence>
<proteinExistence type="inferred from homology"/>
<accession>P47610</accession>
<reference key="1">
    <citation type="journal article" date="1995" name="Science">
        <title>The minimal gene complement of Mycoplasma genitalium.</title>
        <authorList>
            <person name="Fraser C.M."/>
            <person name="Gocayne J.D."/>
            <person name="White O."/>
            <person name="Adams M.D."/>
            <person name="Clayton R.A."/>
            <person name="Fleischmann R.D."/>
            <person name="Bult C.J."/>
            <person name="Kerlavage A.R."/>
            <person name="Sutton G.G."/>
            <person name="Kelley J.M."/>
            <person name="Fritchman J.L."/>
            <person name="Weidman J.F."/>
            <person name="Small K.V."/>
            <person name="Sandusky M."/>
            <person name="Fuhrmann J.L."/>
            <person name="Nguyen D.T."/>
            <person name="Utterback T.R."/>
            <person name="Saudek D.M."/>
            <person name="Phillips C.A."/>
            <person name="Merrick J.M."/>
            <person name="Tomb J.-F."/>
            <person name="Dougherty B.A."/>
            <person name="Bott K.F."/>
            <person name="Hu P.-C."/>
            <person name="Lucier T.S."/>
            <person name="Peterson S.N."/>
            <person name="Smith H.O."/>
            <person name="Hutchison C.A. III"/>
            <person name="Venter J.C."/>
        </authorList>
    </citation>
    <scope>NUCLEOTIDE SEQUENCE [LARGE SCALE GENOMIC DNA]</scope>
    <source>
        <strain>ATCC 33530 / DSM 19775 / NCTC 10195 / G37</strain>
    </source>
</reference>
<reference key="2">
    <citation type="journal article" date="1993" name="J. Bacteriol.">
        <title>A survey of the Mycoplasma genitalium genome by using random sequencing.</title>
        <authorList>
            <person name="Peterson S.N."/>
            <person name="Hu P.-C."/>
            <person name="Bott K.F."/>
            <person name="Hutchison C.A. III"/>
        </authorList>
    </citation>
    <scope>NUCLEOTIDE SEQUENCE [GENOMIC DNA] OF 81-199</scope>
    <source>
        <strain>ATCC 33530 / DSM 19775 / NCTC 10195 / G37</strain>
    </source>
</reference>
<comment type="catalytic activity">
    <reaction>
        <text>a uridine in RNA = a pseudouridine in RNA</text>
        <dbReference type="Rhea" id="RHEA:48348"/>
        <dbReference type="Rhea" id="RHEA-COMP:12068"/>
        <dbReference type="Rhea" id="RHEA-COMP:12069"/>
        <dbReference type="ChEBI" id="CHEBI:65314"/>
        <dbReference type="ChEBI" id="CHEBI:65315"/>
    </reaction>
</comment>
<comment type="similarity">
    <text evidence="3">Belongs to the pseudouridine synthase RluA family.</text>
</comment>
<feature type="chain" id="PRO_0000162741" description="Uncharacterized RNA pseudouridine synthase MG370">
    <location>
        <begin position="1"/>
        <end position="323"/>
    </location>
</feature>
<feature type="domain" description="S4 RNA-binding" evidence="2">
    <location>
        <begin position="16"/>
        <end position="95"/>
    </location>
</feature>
<feature type="active site" evidence="1">
    <location>
        <position position="148"/>
    </location>
</feature>
<dbReference type="EC" id="5.4.99.-"/>
<dbReference type="EMBL" id="L43967">
    <property type="protein sequence ID" value="AAC71597.1"/>
    <property type="molecule type" value="Genomic_DNA"/>
</dbReference>
<dbReference type="EMBL" id="U02220">
    <property type="protein sequence ID" value="AAA03374.1"/>
    <property type="molecule type" value="Genomic_DNA"/>
</dbReference>
<dbReference type="PIR" id="I64240">
    <property type="entry name" value="I64240"/>
</dbReference>
<dbReference type="RefSeq" id="WP_010869454.1">
    <property type="nucleotide sequence ID" value="NC_000908.2"/>
</dbReference>
<dbReference type="SMR" id="P47610"/>
<dbReference type="STRING" id="243273.MG_370"/>
<dbReference type="GeneID" id="88282553"/>
<dbReference type="KEGG" id="mge:MG_370"/>
<dbReference type="eggNOG" id="COG0564">
    <property type="taxonomic scope" value="Bacteria"/>
</dbReference>
<dbReference type="HOGENOM" id="CLU_016902_1_0_14"/>
<dbReference type="InParanoid" id="P47610"/>
<dbReference type="Proteomes" id="UP000000807">
    <property type="component" value="Chromosome"/>
</dbReference>
<dbReference type="GO" id="GO:0140098">
    <property type="term" value="F:catalytic activity, acting on RNA"/>
    <property type="evidence" value="ECO:0007669"/>
    <property type="project" value="UniProtKB-ARBA"/>
</dbReference>
<dbReference type="GO" id="GO:0009982">
    <property type="term" value="F:pseudouridine synthase activity"/>
    <property type="evidence" value="ECO:0000318"/>
    <property type="project" value="GO_Central"/>
</dbReference>
<dbReference type="GO" id="GO:0003723">
    <property type="term" value="F:RNA binding"/>
    <property type="evidence" value="ECO:0007669"/>
    <property type="project" value="UniProtKB-KW"/>
</dbReference>
<dbReference type="GO" id="GO:0000455">
    <property type="term" value="P:enzyme-directed rRNA pseudouridine synthesis"/>
    <property type="evidence" value="ECO:0000318"/>
    <property type="project" value="GO_Central"/>
</dbReference>
<dbReference type="CDD" id="cd02869">
    <property type="entry name" value="PseudoU_synth_RluA_like"/>
    <property type="match status" value="1"/>
</dbReference>
<dbReference type="Gene3D" id="3.30.2350.10">
    <property type="entry name" value="Pseudouridine synthase"/>
    <property type="match status" value="1"/>
</dbReference>
<dbReference type="Gene3D" id="3.10.290.10">
    <property type="entry name" value="RNA-binding S4 domain"/>
    <property type="match status" value="1"/>
</dbReference>
<dbReference type="InterPro" id="IPR020103">
    <property type="entry name" value="PsdUridine_synth_cat_dom_sf"/>
</dbReference>
<dbReference type="InterPro" id="IPR006224">
    <property type="entry name" value="PsdUridine_synth_RluA-like_CS"/>
</dbReference>
<dbReference type="InterPro" id="IPR006225">
    <property type="entry name" value="PsdUridine_synth_RluC/D"/>
</dbReference>
<dbReference type="InterPro" id="IPR006145">
    <property type="entry name" value="PsdUridine_synth_RsuA/RluA"/>
</dbReference>
<dbReference type="InterPro" id="IPR050188">
    <property type="entry name" value="RluA_PseudoU_synthase"/>
</dbReference>
<dbReference type="InterPro" id="IPR036986">
    <property type="entry name" value="S4_RNA-bd_sf"/>
</dbReference>
<dbReference type="NCBIfam" id="TIGR00005">
    <property type="entry name" value="rluA_subfam"/>
    <property type="match status" value="1"/>
</dbReference>
<dbReference type="PANTHER" id="PTHR21600">
    <property type="entry name" value="MITOCHONDRIAL RNA PSEUDOURIDINE SYNTHASE"/>
    <property type="match status" value="1"/>
</dbReference>
<dbReference type="PANTHER" id="PTHR21600:SF44">
    <property type="entry name" value="RIBOSOMAL LARGE SUBUNIT PSEUDOURIDINE SYNTHASE D"/>
    <property type="match status" value="1"/>
</dbReference>
<dbReference type="Pfam" id="PF00849">
    <property type="entry name" value="PseudoU_synth_2"/>
    <property type="match status" value="1"/>
</dbReference>
<dbReference type="SUPFAM" id="SSF55120">
    <property type="entry name" value="Pseudouridine synthase"/>
    <property type="match status" value="1"/>
</dbReference>
<dbReference type="PROSITE" id="PS01129">
    <property type="entry name" value="PSI_RLU"/>
    <property type="match status" value="1"/>
</dbReference>
<dbReference type="PROSITE" id="PS50889">
    <property type="entry name" value="S4"/>
    <property type="match status" value="1"/>
</dbReference>
<evidence type="ECO:0000250" key="1"/>
<evidence type="ECO:0000255" key="2">
    <source>
        <dbReference type="PROSITE-ProRule" id="PRU00182"/>
    </source>
</evidence>
<evidence type="ECO:0000305" key="3"/>
<organism>
    <name type="scientific">Mycoplasma genitalium (strain ATCC 33530 / DSM 19775 / NCTC 10195 / G37)</name>
    <name type="common">Mycoplasmoides genitalium</name>
    <dbReference type="NCBI Taxonomy" id="243273"/>
    <lineage>
        <taxon>Bacteria</taxon>
        <taxon>Bacillati</taxon>
        <taxon>Mycoplasmatota</taxon>
        <taxon>Mycoplasmoidales</taxon>
        <taxon>Mycoplasmoidaceae</taxon>
        <taxon>Mycoplasmoides</taxon>
    </lineage>
</organism>
<protein>
    <recommendedName>
        <fullName>Uncharacterized RNA pseudouridine synthase MG370</fullName>
        <ecNumber>5.4.99.-</ecNumber>
    </recommendedName>
    <alternativeName>
        <fullName>RNA pseudouridylate synthase</fullName>
    </alternativeName>
    <alternativeName>
        <fullName>RNA-uridine isomerase</fullName>
    </alternativeName>
</protein>
<keyword id="KW-0413">Isomerase</keyword>
<keyword id="KW-1185">Reference proteome</keyword>
<keyword id="KW-0694">RNA-binding</keyword>